<keyword id="KW-0150">Chloroplast</keyword>
<keyword id="KW-0249">Electron transport</keyword>
<keyword id="KW-0349">Heme</keyword>
<keyword id="KW-0408">Iron</keyword>
<keyword id="KW-0472">Membrane</keyword>
<keyword id="KW-0479">Metal-binding</keyword>
<keyword id="KW-0602">Photosynthesis</keyword>
<keyword id="KW-0604">Photosystem II</keyword>
<keyword id="KW-0934">Plastid</keyword>
<keyword id="KW-1185">Reference proteome</keyword>
<keyword id="KW-0793">Thylakoid</keyword>
<keyword id="KW-0812">Transmembrane</keyword>
<keyword id="KW-1133">Transmembrane helix</keyword>
<keyword id="KW-0813">Transport</keyword>
<accession>Q0ZJ03</accession>
<feature type="chain" id="PRO_0000275720" description="Cytochrome b559 subunit alpha">
    <location>
        <begin position="1"/>
        <end position="83"/>
    </location>
</feature>
<feature type="transmembrane region" description="Helical" evidence="1">
    <location>
        <begin position="21"/>
        <end position="35"/>
    </location>
</feature>
<feature type="binding site" description="axial binding residue" evidence="1">
    <location>
        <position position="23"/>
    </location>
    <ligand>
        <name>heme</name>
        <dbReference type="ChEBI" id="CHEBI:30413"/>
        <note>ligand shared with beta subunit</note>
    </ligand>
    <ligandPart>
        <name>Fe</name>
        <dbReference type="ChEBI" id="CHEBI:18248"/>
    </ligandPart>
</feature>
<gene>
    <name evidence="1" type="primary">psbE</name>
</gene>
<geneLocation type="chloroplast"/>
<organism>
    <name type="scientific">Vitis vinifera</name>
    <name type="common">Grape</name>
    <dbReference type="NCBI Taxonomy" id="29760"/>
    <lineage>
        <taxon>Eukaryota</taxon>
        <taxon>Viridiplantae</taxon>
        <taxon>Streptophyta</taxon>
        <taxon>Embryophyta</taxon>
        <taxon>Tracheophyta</taxon>
        <taxon>Spermatophyta</taxon>
        <taxon>Magnoliopsida</taxon>
        <taxon>eudicotyledons</taxon>
        <taxon>Gunneridae</taxon>
        <taxon>Pentapetalae</taxon>
        <taxon>rosids</taxon>
        <taxon>Vitales</taxon>
        <taxon>Vitaceae</taxon>
        <taxon>Viteae</taxon>
        <taxon>Vitis</taxon>
    </lineage>
</organism>
<dbReference type="EMBL" id="DQ424856">
    <property type="protein sequence ID" value="ABE47551.1"/>
    <property type="molecule type" value="Genomic_DNA"/>
</dbReference>
<dbReference type="RefSeq" id="YP_567093.1">
    <property type="nucleotide sequence ID" value="NC_007957.1"/>
</dbReference>
<dbReference type="SMR" id="Q0ZJ03"/>
<dbReference type="FunCoup" id="Q0ZJ03">
    <property type="interactions" value="26"/>
</dbReference>
<dbReference type="STRING" id="29760.Q0ZJ03"/>
<dbReference type="GeneID" id="4025054"/>
<dbReference type="KEGG" id="vvi:4025054"/>
<dbReference type="InParanoid" id="Q0ZJ03"/>
<dbReference type="OrthoDB" id="656645at71240"/>
<dbReference type="Proteomes" id="UP000009183">
    <property type="component" value="Chloroplast"/>
</dbReference>
<dbReference type="GO" id="GO:0009535">
    <property type="term" value="C:chloroplast thylakoid membrane"/>
    <property type="evidence" value="ECO:0007669"/>
    <property type="project" value="UniProtKB-SubCell"/>
</dbReference>
<dbReference type="GO" id="GO:0009539">
    <property type="term" value="C:photosystem II reaction center"/>
    <property type="evidence" value="ECO:0007669"/>
    <property type="project" value="InterPro"/>
</dbReference>
<dbReference type="GO" id="GO:0009055">
    <property type="term" value="F:electron transfer activity"/>
    <property type="evidence" value="ECO:0007669"/>
    <property type="project" value="UniProtKB-UniRule"/>
</dbReference>
<dbReference type="GO" id="GO:0020037">
    <property type="term" value="F:heme binding"/>
    <property type="evidence" value="ECO:0007669"/>
    <property type="project" value="InterPro"/>
</dbReference>
<dbReference type="GO" id="GO:0005506">
    <property type="term" value="F:iron ion binding"/>
    <property type="evidence" value="ECO:0007669"/>
    <property type="project" value="UniProtKB-UniRule"/>
</dbReference>
<dbReference type="GO" id="GO:0009767">
    <property type="term" value="P:photosynthetic electron transport chain"/>
    <property type="evidence" value="ECO:0007669"/>
    <property type="project" value="InterPro"/>
</dbReference>
<dbReference type="Gene3D" id="1.20.5.860">
    <property type="entry name" value="Photosystem II cytochrome b559, alpha subunit"/>
    <property type="match status" value="1"/>
</dbReference>
<dbReference type="HAMAP" id="MF_00642">
    <property type="entry name" value="PSII_PsbE"/>
    <property type="match status" value="1"/>
</dbReference>
<dbReference type="InterPro" id="IPR006217">
    <property type="entry name" value="PSII_cyt_b559_asu"/>
</dbReference>
<dbReference type="InterPro" id="IPR037025">
    <property type="entry name" value="PSII_cyt_b559_asu_sf"/>
</dbReference>
<dbReference type="InterPro" id="IPR006216">
    <property type="entry name" value="PSII_cyt_b559_CS"/>
</dbReference>
<dbReference type="InterPro" id="IPR013081">
    <property type="entry name" value="PSII_cyt_b559_N"/>
</dbReference>
<dbReference type="InterPro" id="IPR013082">
    <property type="entry name" value="PSII_cytb559_asu_lum"/>
</dbReference>
<dbReference type="NCBIfam" id="TIGR01332">
    <property type="entry name" value="cyt_b559_alpha"/>
    <property type="match status" value="1"/>
</dbReference>
<dbReference type="PANTHER" id="PTHR33391">
    <property type="entry name" value="CYTOCHROME B559 SUBUNIT BETA-RELATED"/>
    <property type="match status" value="1"/>
</dbReference>
<dbReference type="PANTHER" id="PTHR33391:SF9">
    <property type="entry name" value="CYTOCHROME B559 SUBUNIT BETA-RELATED"/>
    <property type="match status" value="1"/>
</dbReference>
<dbReference type="Pfam" id="PF00283">
    <property type="entry name" value="Cytochrom_B559"/>
    <property type="match status" value="1"/>
</dbReference>
<dbReference type="Pfam" id="PF00284">
    <property type="entry name" value="Cytochrom_B559a"/>
    <property type="match status" value="1"/>
</dbReference>
<dbReference type="PIRSF" id="PIRSF000036">
    <property type="entry name" value="PsbE"/>
    <property type="match status" value="1"/>
</dbReference>
<dbReference type="SUPFAM" id="SSF161045">
    <property type="entry name" value="Cytochrome b559 subunits"/>
    <property type="match status" value="1"/>
</dbReference>
<dbReference type="PROSITE" id="PS00537">
    <property type="entry name" value="CYTOCHROME_B559"/>
    <property type="match status" value="1"/>
</dbReference>
<protein>
    <recommendedName>
        <fullName evidence="1">Cytochrome b559 subunit alpha</fullName>
    </recommendedName>
    <alternativeName>
        <fullName evidence="1">PSII reaction center subunit V</fullName>
    </alternativeName>
</protein>
<comment type="function">
    <text evidence="1">This b-type cytochrome is tightly associated with the reaction center of photosystem II (PSII). PSII is a light-driven water:plastoquinone oxidoreductase that uses light energy to abstract electrons from H(2)O, generating O(2) and a proton gradient subsequently used for ATP formation. It consists of a core antenna complex that captures photons, and an electron transfer chain that converts photonic excitation into a charge separation.</text>
</comment>
<comment type="cofactor">
    <cofactor evidence="1">
        <name>heme b</name>
        <dbReference type="ChEBI" id="CHEBI:60344"/>
    </cofactor>
    <text evidence="1">With its partner (PsbF) binds heme. PSII binds additional chlorophylls, carotenoids and specific lipids.</text>
</comment>
<comment type="subunit">
    <text evidence="1">Heterodimer of an alpha subunit and a beta subunit. PSII is composed of 1 copy each of membrane proteins PsbA, PsbB, PsbC, PsbD, PsbE, PsbF, PsbH, PsbI, PsbJ, PsbK, PsbL, PsbM, PsbT, PsbX, PsbY, PsbZ, Psb30/Ycf12, at least 3 peripheral proteins of the oxygen-evolving complex and a large number of cofactors. It forms dimeric complexes.</text>
</comment>
<comment type="subcellular location">
    <subcellularLocation>
        <location evidence="1">Plastid</location>
        <location evidence="1">Chloroplast thylakoid membrane</location>
        <topology evidence="1">Single-pass membrane protein</topology>
    </subcellularLocation>
</comment>
<comment type="similarity">
    <text evidence="1">Belongs to the PsbE/PsbF family.</text>
</comment>
<reference key="1">
    <citation type="journal article" date="2006" name="BMC Evol. Biol.">
        <title>Phylogenetic analyses of Vitis (Vitaceae) based on complete chloroplast genome sequences: effects of taxon sampling and phylogenetic methods on resolving relationships among rosids.</title>
        <authorList>
            <person name="Jansen R.K."/>
            <person name="Kaittanis C."/>
            <person name="Lee S.-B."/>
            <person name="Saski C."/>
            <person name="Tomkins J."/>
            <person name="Alverson A.J."/>
            <person name="Daniell H."/>
        </authorList>
    </citation>
    <scope>NUCLEOTIDE SEQUENCE [LARGE SCALE GENOMIC DNA]</scope>
    <source>
        <strain>cv. Maxxa</strain>
    </source>
</reference>
<name>PSBE_VITVI</name>
<evidence type="ECO:0000255" key="1">
    <source>
        <dbReference type="HAMAP-Rule" id="MF_00642"/>
    </source>
</evidence>
<proteinExistence type="inferred from homology"/>
<sequence>MSGSTGERSFADIITSIRYWVIHSITIPSLFIAGWLFVSTGLAYDVFGSPRPNEYFTESRQGIPLITGRFDPLEQLDEFSRSF</sequence>